<name>YP13A_YEAST</name>
<proteinExistence type="evidence at transcript level"/>
<gene>
    <name type="primary">TY1A-PR2</name>
    <name type="synonym">YPRWTy1-3 GAG</name>
    <name type="ordered locus">YPR158W-A</name>
    <name type="ORF">P9584.3</name>
</gene>
<keyword id="KW-0963">Cytoplasm</keyword>
<keyword id="KW-0597">Phosphoprotein</keyword>
<keyword id="KW-1185">Reference proteome</keyword>
<keyword id="KW-0688">Ribosomal frameshifting</keyword>
<keyword id="KW-0694">RNA-binding</keyword>
<keyword id="KW-0814">Transposable element</keyword>
<evidence type="ECO:0000250" key="1"/>
<evidence type="ECO:0000250" key="2">
    <source>
        <dbReference type="UniProtKB" id="Q12441"/>
    </source>
</evidence>
<evidence type="ECO:0000256" key="3">
    <source>
        <dbReference type="SAM" id="MobiDB-lite"/>
    </source>
</evidence>
<evidence type="ECO:0000269" key="4">
    <source>
    </source>
</evidence>
<accession>P0CX60</accession>
<accession>D6W2K0</accession>
<accession>Q99209</accession>
<protein>
    <recommendedName>
        <fullName>Transposon Ty1-PR2 Gag polyprotein</fullName>
    </recommendedName>
    <alternativeName>
        <fullName>Gag-p49</fullName>
    </alternativeName>
    <alternativeName>
        <fullName>Transposon Ty1 protein A</fullName>
        <shortName>TY1A</shortName>
        <shortName>TYA</shortName>
    </alternativeName>
    <alternativeName>
        <fullName>p58</fullName>
    </alternativeName>
    <component>
        <recommendedName>
            <fullName>Capsid protein</fullName>
            <shortName>CA</shortName>
        </recommendedName>
        <alternativeName>
            <fullName>Gag-p45</fullName>
        </alternativeName>
        <alternativeName>
            <fullName>p54</fullName>
        </alternativeName>
    </component>
    <component>
        <recommendedName>
            <fullName>Gag-p4</fullName>
        </recommendedName>
    </component>
</protein>
<dbReference type="EMBL" id="U28371">
    <property type="status" value="NOT_ANNOTATED_CDS"/>
    <property type="molecule type" value="Genomic_DNA"/>
</dbReference>
<dbReference type="EMBL" id="BK006949">
    <property type="protein sequence ID" value="DAA11572.1"/>
    <property type="molecule type" value="Genomic_DNA"/>
</dbReference>
<dbReference type="PIR" id="S69976">
    <property type="entry name" value="S69976"/>
</dbReference>
<dbReference type="RefSeq" id="NP_058184.3">
    <molecule id="P0CX60-1"/>
    <property type="nucleotide sequence ID" value="NM_001184385.3"/>
</dbReference>
<dbReference type="RefSeq" id="NP_058194.1">
    <molecule id="P0CX60-1"/>
    <property type="nucleotide sequence ID" value="NM_001184397.1"/>
</dbReference>
<dbReference type="SMR" id="P0CX60"/>
<dbReference type="BioGRID" id="34538">
    <property type="interactions" value="2"/>
</dbReference>
<dbReference type="BioGRID" id="36326">
    <property type="interactions" value="9"/>
</dbReference>
<dbReference type="FunCoup" id="P0CX60">
    <property type="interactions" value="47"/>
</dbReference>
<dbReference type="IntAct" id="P0CX60">
    <property type="interactions" value="1"/>
</dbReference>
<dbReference type="MINT" id="P0CX60"/>
<dbReference type="GlyGen" id="P0CX60">
    <property type="glycosylation" value="2 sites"/>
</dbReference>
<dbReference type="GeneID" id="856282"/>
<dbReference type="KEGG" id="sce:YOR142W-A"/>
<dbReference type="KEGG" id="sce:YPR158W-A"/>
<dbReference type="AGR" id="SGD:S000007363"/>
<dbReference type="SGD" id="S000007363">
    <property type="gene designation" value="YPR158W-A"/>
</dbReference>
<dbReference type="VEuPathDB" id="FungiDB:YOR142W-A"/>
<dbReference type="VEuPathDB" id="FungiDB:YPR158W-A"/>
<dbReference type="HOGENOM" id="CLU_045291_1_0_1"/>
<dbReference type="InParanoid" id="P0CX60"/>
<dbReference type="OrthoDB" id="4046078at2759"/>
<dbReference type="Proteomes" id="UP000002311">
    <property type="component" value="Chromosome XVI"/>
</dbReference>
<dbReference type="RNAct" id="P0CX60">
    <property type="molecule type" value="protein"/>
</dbReference>
<dbReference type="GO" id="GO:0005737">
    <property type="term" value="C:cytoplasm"/>
    <property type="evidence" value="ECO:0007669"/>
    <property type="project" value="UniProtKB-SubCell"/>
</dbReference>
<dbReference type="GO" id="GO:0003723">
    <property type="term" value="F:RNA binding"/>
    <property type="evidence" value="ECO:0007669"/>
    <property type="project" value="UniProtKB-KW"/>
</dbReference>
<dbReference type="GO" id="GO:0075523">
    <property type="term" value="P:viral translational frameshifting"/>
    <property type="evidence" value="ECO:0007669"/>
    <property type="project" value="UniProtKB-KW"/>
</dbReference>
<dbReference type="InterPro" id="IPR015820">
    <property type="entry name" value="TYA"/>
</dbReference>
<dbReference type="Pfam" id="PF01021">
    <property type="entry name" value="TYA"/>
    <property type="match status" value="1"/>
</dbReference>
<reference key="1">
    <citation type="journal article" date="1997" name="Nature">
        <title>The nucleotide sequence of Saccharomyces cerevisiae chromosome XVI.</title>
        <authorList>
            <person name="Bussey H."/>
            <person name="Storms R.K."/>
            <person name="Ahmed A."/>
            <person name="Albermann K."/>
            <person name="Allen E."/>
            <person name="Ansorge W."/>
            <person name="Araujo R."/>
            <person name="Aparicio A."/>
            <person name="Barrell B.G."/>
            <person name="Badcock K."/>
            <person name="Benes V."/>
            <person name="Botstein D."/>
            <person name="Bowman S."/>
            <person name="Brueckner M."/>
            <person name="Carpenter J."/>
            <person name="Cherry J.M."/>
            <person name="Chung E."/>
            <person name="Churcher C.M."/>
            <person name="Coster F."/>
            <person name="Davis K."/>
            <person name="Davis R.W."/>
            <person name="Dietrich F.S."/>
            <person name="Delius H."/>
            <person name="DiPaolo T."/>
            <person name="Dubois E."/>
            <person name="Duesterhoeft A."/>
            <person name="Duncan M."/>
            <person name="Floeth M."/>
            <person name="Fortin N."/>
            <person name="Friesen J.D."/>
            <person name="Fritz C."/>
            <person name="Goffeau A."/>
            <person name="Hall J."/>
            <person name="Hebling U."/>
            <person name="Heumann K."/>
            <person name="Hilbert H."/>
            <person name="Hillier L.W."/>
            <person name="Hunicke-Smith S."/>
            <person name="Hyman R.W."/>
            <person name="Johnston M."/>
            <person name="Kalman S."/>
            <person name="Kleine K."/>
            <person name="Komp C."/>
            <person name="Kurdi O."/>
            <person name="Lashkari D."/>
            <person name="Lew H."/>
            <person name="Lin A."/>
            <person name="Lin D."/>
            <person name="Louis E.J."/>
            <person name="Marathe R."/>
            <person name="Messenguy F."/>
            <person name="Mewes H.-W."/>
            <person name="Mirtipati S."/>
            <person name="Moestl D."/>
            <person name="Mueller-Auer S."/>
            <person name="Namath A."/>
            <person name="Nentwich U."/>
            <person name="Oefner P."/>
            <person name="Pearson D."/>
            <person name="Petel F.X."/>
            <person name="Pohl T.M."/>
            <person name="Purnelle B."/>
            <person name="Rajandream M.A."/>
            <person name="Rechmann S."/>
            <person name="Rieger M."/>
            <person name="Riles L."/>
            <person name="Roberts D."/>
            <person name="Schaefer M."/>
            <person name="Scharfe M."/>
            <person name="Scherens B."/>
            <person name="Schramm S."/>
            <person name="Schroeder M."/>
            <person name="Sdicu A.-M."/>
            <person name="Tettelin H."/>
            <person name="Urrestarazu L.A."/>
            <person name="Ushinsky S."/>
            <person name="Vierendeels F."/>
            <person name="Vissers S."/>
            <person name="Voss H."/>
            <person name="Walsh S.V."/>
            <person name="Wambutt R."/>
            <person name="Wang Y."/>
            <person name="Wedler E."/>
            <person name="Wedler H."/>
            <person name="Winnett E."/>
            <person name="Zhong W.-W."/>
            <person name="Zollner A."/>
            <person name="Vo D.H."/>
            <person name="Hani J."/>
        </authorList>
    </citation>
    <scope>NUCLEOTIDE SEQUENCE [LARGE SCALE GENOMIC DNA]</scope>
    <source>
        <strain>ATCC 204508 / S288c</strain>
    </source>
</reference>
<reference key="2">
    <citation type="journal article" date="2014" name="G3 (Bethesda)">
        <title>The reference genome sequence of Saccharomyces cerevisiae: Then and now.</title>
        <authorList>
            <person name="Engel S.R."/>
            <person name="Dietrich F.S."/>
            <person name="Fisk D.G."/>
            <person name="Binkley G."/>
            <person name="Balakrishnan R."/>
            <person name="Costanzo M.C."/>
            <person name="Dwight S.S."/>
            <person name="Hitz B.C."/>
            <person name="Karra K."/>
            <person name="Nash R.S."/>
            <person name="Weng S."/>
            <person name="Wong E.D."/>
            <person name="Lloyd P."/>
            <person name="Skrzypek M.S."/>
            <person name="Miyasato S.R."/>
            <person name="Simison M."/>
            <person name="Cherry J.M."/>
        </authorList>
    </citation>
    <scope>GENOME REANNOTATION</scope>
    <source>
        <strain>ATCC 204508 / S288c</strain>
    </source>
</reference>
<reference key="3">
    <citation type="journal article" date="1998" name="Genome Res.">
        <title>Transposable elements and genome organization: a comprehensive survey of retrotransposons revealed by the complete Saccharomyces cerevisiae genome sequence.</title>
        <authorList>
            <person name="Kim J.M."/>
            <person name="Vanguri S."/>
            <person name="Boeke J.D."/>
            <person name="Gabriel A."/>
            <person name="Voytas D.F."/>
        </authorList>
    </citation>
    <scope>NOMENCLATURE</scope>
</reference>
<reference key="4">
    <citation type="journal article" date="2002" name="Mol. Cell. Biol.">
        <title>Differential effects of chromatin and Gcn4 on the 50-fold range of expression among individual yeast Ty1 retrotransposons.</title>
        <authorList>
            <person name="Morillon A."/>
            <person name="Benard L."/>
            <person name="Springer M."/>
            <person name="Lesage P."/>
        </authorList>
    </citation>
    <scope>INDUCTION</scope>
</reference>
<reference key="5">
    <citation type="journal article" date="2005" name="Cytogenet. Genome Res.">
        <title>Happy together: the life and times of Ty retrotransposons and their hosts.</title>
        <authorList>
            <person name="Lesage P."/>
            <person name="Todeschini A.L."/>
        </authorList>
    </citation>
    <scope>REVIEW</scope>
</reference>
<organism>
    <name type="scientific">Saccharomyces cerevisiae (strain ATCC 204508 / S288c)</name>
    <name type="common">Baker's yeast</name>
    <dbReference type="NCBI Taxonomy" id="559292"/>
    <lineage>
        <taxon>Eukaryota</taxon>
        <taxon>Fungi</taxon>
        <taxon>Dikarya</taxon>
        <taxon>Ascomycota</taxon>
        <taxon>Saccharomycotina</taxon>
        <taxon>Saccharomycetes</taxon>
        <taxon>Saccharomycetales</taxon>
        <taxon>Saccharomycetaceae</taxon>
        <taxon>Saccharomyces</taxon>
    </lineage>
</organism>
<comment type="function">
    <text evidence="1">Capsid protein (CA) is the structural component of the virus-like particle (VLP), forming the shell that encapsulates the retrotransposons dimeric RNA genome. The particles are assembled from trimer-clustered units and there are holes in the capsid shells that allow for the diffusion of macromolecules. CA also has nucleocapsid-like chaperone activity, promoting primer tRNA(i)-Met annealing to the multipartite primer-binding site (PBS), dimerization of Ty1 RNA and initiation of reverse transcription (By similarity).</text>
</comment>
<comment type="subunit">
    <text evidence="1">Homotrimer.</text>
</comment>
<comment type="subcellular location">
    <subcellularLocation>
        <location evidence="1">Cytoplasm</location>
    </subcellularLocation>
</comment>
<comment type="alternative products">
    <event type="ribosomal frameshifting"/>
    <isoform>
        <id>P0CX60-1</id>
        <name>Transposon Ty1-PR2 Gag polyprotein</name>
        <sequence type="displayed"/>
    </isoform>
    <isoform>
        <id>P0C2J0-1</id>
        <name>Transposon Ty1-PR2 Gag-Pol polyprotein</name>
        <sequence type="external"/>
    </isoform>
    <text evidence="1">The Gag-Pol polyprotein is generated by a +1 ribosomal frameshift. The ratio of Gag:Gag-Pol varies between 20:1 and 5:1 (By similarity).</text>
</comment>
<comment type="induction">
    <text evidence="4">Ty1-PR2 is a weakly expressed element. Induced under amino acid starvation conditions by GCN4.</text>
</comment>
<comment type="domain">
    <text evidence="1">The C-terminal RNA-binding region of CA is sufficient for all its nucleocapsid-like chaperone activities.</text>
</comment>
<comment type="miscellaneous">
    <text>Retrotransposons are mobile genetic entities that are able to replicate via an RNA intermediate and a reverse transcription step. In contrast to retroviruses, retrotransposons are non-infectious, lack an envelope and remain intracellular. Ty1 retrotransposons belong to the copia elements (pseudoviridae).</text>
</comment>
<comment type="miscellaneous">
    <molecule>Isoform Transposon Ty1-PR2 Gag polyprotein</molecule>
    <text>Produced by conventional translation.</text>
</comment>
<sequence length="440" mass="49098">MESQQLSNYPHISHGSACASVTSKEVHTNQDPLDVSASKIQEYDKASTKANSQQTTTPASSAVPENPHHASPQPASVPPPQNGPYPQQCMMTQNQANPSGWSFYGHPSMIPYTPYQMSPMYFPPGPQSQFPQYPSSVGTPLSTPSPESGNTFTDSSSADSDMTSTKKYVRPPPMLTSPNDFPNWVKTYIKFLQNSNLGGIIPTVNGKPVRPITDDELTFLYNTFQIFAPSQFLPTWVKDILSVDYTDIMKILSKSIEKMQSDTQEANDIVTLANLQYNGSTPADAFETKVTNIIDRLNNNGIHINNKVACQLIMRGLSGEYKFLRYTRHRHLNMTVAELFLDIHAIYEEQQGSRNSKPNYRRNPSDEKNDSRSYTNTTKPKVIARNPQKTNNSKSKTARAHNVSTSNNSPSTDNDSISKSTTEPIQLNNKHDLHLRPETY</sequence>
<feature type="chain" id="PRO_0000409806" description="Transposon Ty1-PR2 Gag polyprotein">
    <location>
        <begin position="1"/>
        <end position="440"/>
    </location>
</feature>
<feature type="chain" id="PRO_0000409807" description="Capsid protein" evidence="1">
    <location>
        <begin position="1"/>
        <end position="401"/>
    </location>
</feature>
<feature type="peptide" id="PRO_0000409808" description="Gag-p4" evidence="1">
    <location>
        <begin position="402"/>
        <end position="440"/>
    </location>
</feature>
<feature type="region of interest" description="Disordered" evidence="3">
    <location>
        <begin position="1"/>
        <end position="93"/>
    </location>
</feature>
<feature type="region of interest" description="Disordered" evidence="3">
    <location>
        <begin position="126"/>
        <end position="173"/>
    </location>
</feature>
<feature type="region of interest" description="RNA-binding" evidence="1">
    <location>
        <begin position="299"/>
        <end position="401"/>
    </location>
</feature>
<feature type="region of interest" description="Disordered" evidence="3">
    <location>
        <begin position="352"/>
        <end position="440"/>
    </location>
</feature>
<feature type="compositionally biased region" description="Polar residues" evidence="3">
    <location>
        <begin position="1"/>
        <end position="10"/>
    </location>
</feature>
<feature type="compositionally biased region" description="Polar residues" evidence="3">
    <location>
        <begin position="48"/>
        <end position="60"/>
    </location>
</feature>
<feature type="compositionally biased region" description="Polar residues" evidence="3">
    <location>
        <begin position="127"/>
        <end position="152"/>
    </location>
</feature>
<feature type="compositionally biased region" description="Low complexity" evidence="3">
    <location>
        <begin position="153"/>
        <end position="165"/>
    </location>
</feature>
<feature type="compositionally biased region" description="Low complexity" evidence="3">
    <location>
        <begin position="402"/>
        <end position="418"/>
    </location>
</feature>
<feature type="compositionally biased region" description="Polar residues" evidence="3">
    <location>
        <begin position="419"/>
        <end position="428"/>
    </location>
</feature>
<feature type="compositionally biased region" description="Basic and acidic residues" evidence="3">
    <location>
        <begin position="429"/>
        <end position="440"/>
    </location>
</feature>
<feature type="site" description="Cleavage; by Ty1 protease" evidence="1">
    <location>
        <begin position="401"/>
        <end position="402"/>
    </location>
</feature>
<feature type="modified residue" description="Phosphoserine" evidence="2">
    <location>
        <position position="416"/>
    </location>
</feature>